<accession>Q57CQ5</accession>
<reference key="1">
    <citation type="journal article" date="2005" name="J. Bacteriol.">
        <title>Completion of the genome sequence of Brucella abortus and comparison to the highly similar genomes of Brucella melitensis and Brucella suis.</title>
        <authorList>
            <person name="Halling S.M."/>
            <person name="Peterson-Burch B.D."/>
            <person name="Bricker B.J."/>
            <person name="Zuerner R.L."/>
            <person name="Qing Z."/>
            <person name="Li L.-L."/>
            <person name="Kapur V."/>
            <person name="Alt D.P."/>
            <person name="Olsen S.C."/>
        </authorList>
    </citation>
    <scope>NUCLEOTIDE SEQUENCE [LARGE SCALE GENOMIC DNA]</scope>
    <source>
        <strain>9-941</strain>
    </source>
</reference>
<evidence type="ECO:0000255" key="1">
    <source>
        <dbReference type="HAMAP-Rule" id="MF_00054"/>
    </source>
</evidence>
<keyword id="KW-0963">Cytoplasm</keyword>
<keyword id="KW-0251">Elongation factor</keyword>
<keyword id="KW-0342">GTP-binding</keyword>
<keyword id="KW-0547">Nucleotide-binding</keyword>
<keyword id="KW-0648">Protein biosynthesis</keyword>
<dbReference type="EMBL" id="AE017223">
    <property type="protein sequence ID" value="AAX74579.1"/>
    <property type="molecule type" value="Genomic_DNA"/>
</dbReference>
<dbReference type="RefSeq" id="WP_002964364.1">
    <property type="nucleotide sequence ID" value="NC_006932.1"/>
</dbReference>
<dbReference type="SMR" id="Q57CQ5"/>
<dbReference type="EnsemblBacteria" id="AAX74579">
    <property type="protein sequence ID" value="AAX74579"/>
    <property type="gene ID" value="BruAb1_1241"/>
</dbReference>
<dbReference type="GeneID" id="93016437"/>
<dbReference type="KEGG" id="bmb:BruAb1_1241"/>
<dbReference type="HOGENOM" id="CLU_002794_4_1_5"/>
<dbReference type="Proteomes" id="UP000000540">
    <property type="component" value="Chromosome I"/>
</dbReference>
<dbReference type="GO" id="GO:0005737">
    <property type="term" value="C:cytoplasm"/>
    <property type="evidence" value="ECO:0007669"/>
    <property type="project" value="UniProtKB-SubCell"/>
</dbReference>
<dbReference type="GO" id="GO:0005525">
    <property type="term" value="F:GTP binding"/>
    <property type="evidence" value="ECO:0007669"/>
    <property type="project" value="UniProtKB-UniRule"/>
</dbReference>
<dbReference type="GO" id="GO:0003924">
    <property type="term" value="F:GTPase activity"/>
    <property type="evidence" value="ECO:0007669"/>
    <property type="project" value="InterPro"/>
</dbReference>
<dbReference type="GO" id="GO:0097216">
    <property type="term" value="F:guanosine tetraphosphate binding"/>
    <property type="evidence" value="ECO:0007669"/>
    <property type="project" value="UniProtKB-ARBA"/>
</dbReference>
<dbReference type="GO" id="GO:0003746">
    <property type="term" value="F:translation elongation factor activity"/>
    <property type="evidence" value="ECO:0007669"/>
    <property type="project" value="UniProtKB-UniRule"/>
</dbReference>
<dbReference type="GO" id="GO:0032790">
    <property type="term" value="P:ribosome disassembly"/>
    <property type="evidence" value="ECO:0007669"/>
    <property type="project" value="TreeGrafter"/>
</dbReference>
<dbReference type="CDD" id="cd01886">
    <property type="entry name" value="EF-G"/>
    <property type="match status" value="1"/>
</dbReference>
<dbReference type="CDD" id="cd16262">
    <property type="entry name" value="EFG_III"/>
    <property type="match status" value="1"/>
</dbReference>
<dbReference type="CDD" id="cd01434">
    <property type="entry name" value="EFG_mtEFG1_IV"/>
    <property type="match status" value="1"/>
</dbReference>
<dbReference type="CDD" id="cd03713">
    <property type="entry name" value="EFG_mtEFG_C"/>
    <property type="match status" value="1"/>
</dbReference>
<dbReference type="CDD" id="cd04088">
    <property type="entry name" value="EFG_mtEFG_II"/>
    <property type="match status" value="1"/>
</dbReference>
<dbReference type="FunFam" id="2.40.30.10:FF:000006">
    <property type="entry name" value="Elongation factor G"/>
    <property type="match status" value="1"/>
</dbReference>
<dbReference type="FunFam" id="3.30.230.10:FF:000003">
    <property type="entry name" value="Elongation factor G"/>
    <property type="match status" value="1"/>
</dbReference>
<dbReference type="FunFam" id="3.30.70.240:FF:000001">
    <property type="entry name" value="Elongation factor G"/>
    <property type="match status" value="1"/>
</dbReference>
<dbReference type="FunFam" id="3.30.70.870:FF:000001">
    <property type="entry name" value="Elongation factor G"/>
    <property type="match status" value="1"/>
</dbReference>
<dbReference type="FunFam" id="3.40.50.300:FF:000029">
    <property type="entry name" value="Elongation factor G"/>
    <property type="match status" value="1"/>
</dbReference>
<dbReference type="Gene3D" id="3.30.230.10">
    <property type="match status" value="1"/>
</dbReference>
<dbReference type="Gene3D" id="3.30.70.240">
    <property type="match status" value="1"/>
</dbReference>
<dbReference type="Gene3D" id="3.30.70.870">
    <property type="entry name" value="Elongation Factor G (Translational Gtpase), domain 3"/>
    <property type="match status" value="1"/>
</dbReference>
<dbReference type="Gene3D" id="3.40.50.300">
    <property type="entry name" value="P-loop containing nucleotide triphosphate hydrolases"/>
    <property type="match status" value="1"/>
</dbReference>
<dbReference type="Gene3D" id="2.40.30.10">
    <property type="entry name" value="Translation factors"/>
    <property type="match status" value="1"/>
</dbReference>
<dbReference type="HAMAP" id="MF_00054_B">
    <property type="entry name" value="EF_G_EF_2_B"/>
    <property type="match status" value="1"/>
</dbReference>
<dbReference type="InterPro" id="IPR041095">
    <property type="entry name" value="EFG_II"/>
</dbReference>
<dbReference type="InterPro" id="IPR009022">
    <property type="entry name" value="EFG_III"/>
</dbReference>
<dbReference type="InterPro" id="IPR035647">
    <property type="entry name" value="EFG_III/V"/>
</dbReference>
<dbReference type="InterPro" id="IPR047872">
    <property type="entry name" value="EFG_IV"/>
</dbReference>
<dbReference type="InterPro" id="IPR035649">
    <property type="entry name" value="EFG_V"/>
</dbReference>
<dbReference type="InterPro" id="IPR000640">
    <property type="entry name" value="EFG_V-like"/>
</dbReference>
<dbReference type="InterPro" id="IPR004161">
    <property type="entry name" value="EFTu-like_2"/>
</dbReference>
<dbReference type="InterPro" id="IPR031157">
    <property type="entry name" value="G_TR_CS"/>
</dbReference>
<dbReference type="InterPro" id="IPR027417">
    <property type="entry name" value="P-loop_NTPase"/>
</dbReference>
<dbReference type="InterPro" id="IPR020568">
    <property type="entry name" value="Ribosomal_Su5_D2-typ_SF"/>
</dbReference>
<dbReference type="InterPro" id="IPR014721">
    <property type="entry name" value="Ribsml_uS5_D2-typ_fold_subgr"/>
</dbReference>
<dbReference type="InterPro" id="IPR005225">
    <property type="entry name" value="Small_GTP-bd"/>
</dbReference>
<dbReference type="InterPro" id="IPR000795">
    <property type="entry name" value="T_Tr_GTP-bd_dom"/>
</dbReference>
<dbReference type="InterPro" id="IPR009000">
    <property type="entry name" value="Transl_B-barrel_sf"/>
</dbReference>
<dbReference type="InterPro" id="IPR004540">
    <property type="entry name" value="Transl_elong_EFG/EF2"/>
</dbReference>
<dbReference type="InterPro" id="IPR005517">
    <property type="entry name" value="Transl_elong_EFG/EF2_IV"/>
</dbReference>
<dbReference type="NCBIfam" id="TIGR00484">
    <property type="entry name" value="EF-G"/>
    <property type="match status" value="1"/>
</dbReference>
<dbReference type="NCBIfam" id="NF009381">
    <property type="entry name" value="PRK12740.1-5"/>
    <property type="match status" value="1"/>
</dbReference>
<dbReference type="NCBIfam" id="TIGR00231">
    <property type="entry name" value="small_GTP"/>
    <property type="match status" value="1"/>
</dbReference>
<dbReference type="PANTHER" id="PTHR43261:SF1">
    <property type="entry name" value="RIBOSOME-RELEASING FACTOR 2, MITOCHONDRIAL"/>
    <property type="match status" value="1"/>
</dbReference>
<dbReference type="PANTHER" id="PTHR43261">
    <property type="entry name" value="TRANSLATION ELONGATION FACTOR G-RELATED"/>
    <property type="match status" value="1"/>
</dbReference>
<dbReference type="Pfam" id="PF00679">
    <property type="entry name" value="EFG_C"/>
    <property type="match status" value="1"/>
</dbReference>
<dbReference type="Pfam" id="PF14492">
    <property type="entry name" value="EFG_III"/>
    <property type="match status" value="1"/>
</dbReference>
<dbReference type="Pfam" id="PF03764">
    <property type="entry name" value="EFG_IV"/>
    <property type="match status" value="1"/>
</dbReference>
<dbReference type="Pfam" id="PF00009">
    <property type="entry name" value="GTP_EFTU"/>
    <property type="match status" value="1"/>
</dbReference>
<dbReference type="Pfam" id="PF03144">
    <property type="entry name" value="GTP_EFTU_D2"/>
    <property type="match status" value="1"/>
</dbReference>
<dbReference type="PRINTS" id="PR00315">
    <property type="entry name" value="ELONGATNFCT"/>
</dbReference>
<dbReference type="SMART" id="SM00838">
    <property type="entry name" value="EFG_C"/>
    <property type="match status" value="1"/>
</dbReference>
<dbReference type="SMART" id="SM00889">
    <property type="entry name" value="EFG_IV"/>
    <property type="match status" value="1"/>
</dbReference>
<dbReference type="SUPFAM" id="SSF54980">
    <property type="entry name" value="EF-G C-terminal domain-like"/>
    <property type="match status" value="2"/>
</dbReference>
<dbReference type="SUPFAM" id="SSF52540">
    <property type="entry name" value="P-loop containing nucleoside triphosphate hydrolases"/>
    <property type="match status" value="1"/>
</dbReference>
<dbReference type="SUPFAM" id="SSF54211">
    <property type="entry name" value="Ribosomal protein S5 domain 2-like"/>
    <property type="match status" value="1"/>
</dbReference>
<dbReference type="SUPFAM" id="SSF50447">
    <property type="entry name" value="Translation proteins"/>
    <property type="match status" value="1"/>
</dbReference>
<dbReference type="PROSITE" id="PS00301">
    <property type="entry name" value="G_TR_1"/>
    <property type="match status" value="1"/>
</dbReference>
<dbReference type="PROSITE" id="PS51722">
    <property type="entry name" value="G_TR_2"/>
    <property type="match status" value="1"/>
</dbReference>
<protein>
    <recommendedName>
        <fullName evidence="1">Elongation factor G</fullName>
        <shortName evidence="1">EF-G</shortName>
    </recommendedName>
</protein>
<name>EFG_BRUAB</name>
<comment type="function">
    <text evidence="1">Catalyzes the GTP-dependent ribosomal translocation step during translation elongation. During this step, the ribosome changes from the pre-translocational (PRE) to the post-translocational (POST) state as the newly formed A-site-bound peptidyl-tRNA and P-site-bound deacylated tRNA move to the P and E sites, respectively. Catalyzes the coordinated movement of the two tRNA molecules, the mRNA and conformational changes in the ribosome.</text>
</comment>
<comment type="subcellular location">
    <subcellularLocation>
        <location evidence="1">Cytoplasm</location>
    </subcellularLocation>
</comment>
<comment type="similarity">
    <text evidence="1">Belongs to the TRAFAC class translation factor GTPase superfamily. Classic translation factor GTPase family. EF-G/EF-2 subfamily.</text>
</comment>
<organism>
    <name type="scientific">Brucella abortus biovar 1 (strain 9-941)</name>
    <dbReference type="NCBI Taxonomy" id="262698"/>
    <lineage>
        <taxon>Bacteria</taxon>
        <taxon>Pseudomonadati</taxon>
        <taxon>Pseudomonadota</taxon>
        <taxon>Alphaproteobacteria</taxon>
        <taxon>Hyphomicrobiales</taxon>
        <taxon>Brucellaceae</taxon>
        <taxon>Brucella/Ochrobactrum group</taxon>
        <taxon>Brucella</taxon>
    </lineage>
</organism>
<feature type="chain" id="PRO_0000225195" description="Elongation factor G">
    <location>
        <begin position="1"/>
        <end position="694"/>
    </location>
</feature>
<feature type="domain" description="tr-type G">
    <location>
        <begin position="8"/>
        <end position="287"/>
    </location>
</feature>
<feature type="binding site" evidence="1">
    <location>
        <begin position="17"/>
        <end position="24"/>
    </location>
    <ligand>
        <name>GTP</name>
        <dbReference type="ChEBI" id="CHEBI:37565"/>
    </ligand>
</feature>
<feature type="binding site" evidence="1">
    <location>
        <begin position="86"/>
        <end position="90"/>
    </location>
    <ligand>
        <name>GTP</name>
        <dbReference type="ChEBI" id="CHEBI:37565"/>
    </ligand>
</feature>
<feature type="binding site" evidence="1">
    <location>
        <begin position="140"/>
        <end position="143"/>
    </location>
    <ligand>
        <name>GTP</name>
        <dbReference type="ChEBI" id="CHEBI:37565"/>
    </ligand>
</feature>
<proteinExistence type="inferred from homology"/>
<sequence length="694" mass="76235">MAREYKIEDYRNFGIMAHIDAGKTTMTERILFYTGKNHKIGETHDGASTMDWMEQEQERGITITSAATTTFWQGRDGKKRRFNIIDTPGHVDFTIEVERSLRVLDGAIALLDANAGVEPQTETVWRQAEKYHVPRMVFVNKMDKIGADFYRSVEMVGSRLGAVALPVQLPIGAENDFVGVVDLIEMKALTWDGTIGAPATVGEIPADMADKAEEYREKLIELAVEIDEAAMEAYLEGTMPTNDELRALIRKGTIEVKFHPILCGTAFKNRGVQPLLDAVVEFLPAPTDVPAIKGIDVKTETETTRESSDEAPLSMLAFKIMNDPFVGSLTFARIYSGKLTKGVSLENTVKGKRERIGRMLQMHSNSREDIDEAFAGDIVALAGLKETTTGDTLCDPLKPVILERMEFPDPVIEIAIEPKTKADQEKMGIALNRLAAEDPSFRVKSDEESGQTIIAGMGELHLDILVDRMKREFKVEANVGAPQVAYRESITRAAEIDYTHKKQSGGSGQFARVKIIFEPHDGDDFIFESKIVGGSVPKEYIPGVQKGIESVMGAGPLAGFPMLGVKATLIDGAYHDVDSSVLAFEIASRAAFREGAQKAGAQLLEPIMKVEVVTPEDYVGDVIGDLNSRRGQISGTEARGIAAVVNAMVPLANMFGYVNSLRSMSQGRAQYTMQFDHYEPVPTAVAQEIQKKFA</sequence>
<gene>
    <name evidence="1" type="primary">fusA</name>
    <name type="ordered locus">BruAb1_1241</name>
</gene>